<protein>
    <recommendedName>
        <fullName>Cysteine synthase 1</fullName>
        <ecNumber>2.5.1.47</ecNumber>
    </recommendedName>
    <alternativeName>
        <fullName>At.OAS.5-8</fullName>
    </alternativeName>
    <alternativeName>
        <fullName>Beta-substituted Ala synthase 1;1</fullName>
        <shortName>ARAth-Bsas1;1</shortName>
    </alternativeName>
    <alternativeName>
        <fullName>CSase A</fullName>
        <shortName>AtCS-A</shortName>
    </alternativeName>
    <alternativeName>
        <fullName>Cys-3A</fullName>
    </alternativeName>
    <alternativeName>
        <fullName>O-acetylserine (thiol)-lyase 1</fullName>
        <shortName>OAS-TL A</shortName>
    </alternativeName>
    <alternativeName>
        <fullName>O-acetylserine sulfhydrylase</fullName>
    </alternativeName>
    <alternativeName>
        <fullName>Protein ONSET OF LEAF DEATH 3</fullName>
    </alternativeName>
</protein>
<sequence length="322" mass="33805">MASRIAKDVTELIGNTPLVYLNNVAEGCVGRVAAKLEMMEPCSSVKDRIGFSMISDAEKKGLIKPGESVLIEPTSGNTGVGLAFTAAAKGYKLIITMPASMSTERRIILLAFGVELVLTDPAKGMKGAIAKAEEILAKTPNGYMLQQFENPANPKIHYETTGPEIWKGTGGKIDGFVSGIGTGGTITGAGKYLKEQNANVKLYGVEPVESAILSGGKPGPHKIQGIGAGFIPSVLNVDLIDEVVQVSSDESIDMARQLALKEGLLVGISSGAAAAAAIKLAQRPENAGKLFVAIFPSFGERYLSTVLFDATRKEAEAMTFEA</sequence>
<organism>
    <name type="scientific">Arabidopsis thaliana</name>
    <name type="common">Mouse-ear cress</name>
    <dbReference type="NCBI Taxonomy" id="3702"/>
    <lineage>
        <taxon>Eukaryota</taxon>
        <taxon>Viridiplantae</taxon>
        <taxon>Streptophyta</taxon>
        <taxon>Embryophyta</taxon>
        <taxon>Tracheophyta</taxon>
        <taxon>Spermatophyta</taxon>
        <taxon>Magnoliopsida</taxon>
        <taxon>eudicotyledons</taxon>
        <taxon>Gunneridae</taxon>
        <taxon>Pentapetalae</taxon>
        <taxon>rosids</taxon>
        <taxon>malvids</taxon>
        <taxon>Brassicales</taxon>
        <taxon>Brassicaceae</taxon>
        <taxon>Camelineae</taxon>
        <taxon>Arabidopsis</taxon>
    </lineage>
</organism>
<proteinExistence type="evidence at protein level"/>
<feature type="initiator methionine" description="Removed" evidence="13">
    <location>
        <position position="1"/>
    </location>
</feature>
<feature type="chain" id="PRO_0000167116" description="Cysteine synthase 1">
    <location>
        <begin position="2"/>
        <end position="322"/>
    </location>
</feature>
<feature type="region of interest" description="SUTR1;2 binding" evidence="12">
    <location>
        <begin position="144"/>
        <end position="287"/>
    </location>
</feature>
<feature type="region of interest" description="SAT1 binding" evidence="11">
    <location>
        <begin position="217"/>
        <end position="222"/>
    </location>
</feature>
<feature type="binding site" evidence="4 5 14 15">
    <location>
        <position position="77"/>
    </location>
    <ligand>
        <name>pyridoxal 5'-phosphate</name>
        <dbReference type="ChEBI" id="CHEBI:597326"/>
    </ligand>
</feature>
<feature type="binding site" evidence="4 5 14 15">
    <location>
        <begin position="181"/>
        <end position="185"/>
    </location>
    <ligand>
        <name>pyridoxal 5'-phosphate</name>
        <dbReference type="ChEBI" id="CHEBI:597326"/>
    </ligand>
</feature>
<feature type="binding site" evidence="4 5 14 15">
    <location>
        <position position="269"/>
    </location>
    <ligand>
        <name>pyridoxal 5'-phosphate</name>
        <dbReference type="ChEBI" id="CHEBI:597326"/>
    </ligand>
</feature>
<feature type="modified residue" description="N-acetylalanine" evidence="13">
    <location>
        <position position="2"/>
    </location>
</feature>
<feature type="modified residue" description="N6-(pyridoxal phosphate)lysine" evidence="4 5 14 15">
    <location>
        <position position="46"/>
    </location>
</feature>
<feature type="modified residue" description="Phosphoserine" evidence="16">
    <location>
        <position position="178"/>
    </location>
</feature>
<feature type="mutagenesis site" description="No cysteine synthase activity." evidence="4">
    <original>K</original>
    <variation>A</variation>
    <location>
        <position position="46"/>
    </location>
</feature>
<feature type="mutagenesis site" description="Strong reduction of cysteine synthase activity." evidence="4">
    <original>T</original>
    <variation>A</variation>
    <location>
        <position position="74"/>
    </location>
</feature>
<feature type="mutagenesis site" description="Reduction of cysteine synthase activity." evidence="4">
    <original>T</original>
    <variation>S</variation>
    <location>
        <position position="74"/>
    </location>
</feature>
<feature type="mutagenesis site" description="Strong reduction of cysteine synthase activity." evidence="4">
    <original>S</original>
    <variation>A</variation>
    <variation>N</variation>
    <variation>T</variation>
    <location>
        <position position="75"/>
    </location>
</feature>
<feature type="mutagenesis site" description="Reduction of cysteine synthase activity." evidence="4">
    <original>N</original>
    <variation>A</variation>
    <location>
        <position position="77"/>
    </location>
</feature>
<feature type="mutagenesis site" description="Strong reduction of cysteine synthase activity." evidence="4">
    <original>N</original>
    <variation>D</variation>
    <location>
        <position position="77"/>
    </location>
</feature>
<feature type="mutagenesis site" description="Reduction of cysteine synthase activity." evidence="4">
    <original>T</original>
    <variation>A</variation>
    <variation>S</variation>
    <location>
        <position position="78"/>
    </location>
</feature>
<feature type="mutagenesis site" description="Strong reduction of cysteine synthase activity." evidence="4">
    <original>Q</original>
    <variation>A</variation>
    <variation>E</variation>
    <location>
        <position position="147"/>
    </location>
</feature>
<feature type="mutagenesis site" description="Slight reduction of cysteine synthase activity." evidence="4">
    <original>H</original>
    <variation>Q</variation>
    <variation>N</variation>
    <location>
        <position position="157"/>
    </location>
</feature>
<feature type="mutagenesis site" description="In old3-1; displays a early leaf death phenotype. Abolishes cysteine synthase activity." evidence="8">
    <original>G</original>
    <variation>E</variation>
    <location>
        <position position="162"/>
    </location>
</feature>
<feature type="mutagenesis site" description="Slight reduction of cysteine synthase activity." evidence="4">
    <original>T</original>
    <variation>A</variation>
    <variation>S</variation>
    <location>
        <position position="182"/>
    </location>
</feature>
<feature type="mutagenesis site" description="Strong reduction of cysteine synthase activity." evidence="4">
    <original>T</original>
    <variation>A</variation>
    <variation>S</variation>
    <location>
        <position position="185"/>
    </location>
</feature>
<feature type="mutagenesis site" description="Impaired interaction with SAT1." evidence="4">
    <original>K</original>
    <variation>A</variation>
    <location>
        <position position="217"/>
    </location>
</feature>
<feature type="mutagenesis site" description="Impaired interaction with SAT1." evidence="4">
    <original>H</original>
    <variation>A</variation>
    <location>
        <position position="221"/>
    </location>
</feature>
<feature type="mutagenesis site" description="Impaired interaction with SAT1." evidence="4">
    <original>K</original>
    <variation>A</variation>
    <location>
        <position position="222"/>
    </location>
</feature>
<feature type="mutagenesis site" description="Strong reduction of cysteine synthase activity." evidence="4">
    <original>S</original>
    <variation>A</variation>
    <location>
        <position position="269"/>
    </location>
</feature>
<feature type="mutagenesis site" description="Reduction of cysteine synthase activity." evidence="4">
    <original>S</original>
    <variation>T</variation>
    <location>
        <position position="269"/>
    </location>
</feature>
<feature type="sequence conflict" description="In Ref. 8; AAK76499." evidence="10" ref="8">
    <location>
        <position position="20"/>
    </location>
</feature>
<feature type="sequence conflict" description="In Ref. 3; CAA58893." evidence="10" ref="3">
    <original>A</original>
    <variation>E</variation>
    <location>
        <position position="273"/>
    </location>
</feature>
<feature type="helix" evidence="17">
    <location>
        <begin position="9"/>
        <end position="12"/>
    </location>
</feature>
<feature type="strand" evidence="17">
    <location>
        <begin position="18"/>
        <end position="20"/>
    </location>
</feature>
<feature type="helix" evidence="17">
    <location>
        <begin position="23"/>
        <end position="25"/>
    </location>
</feature>
<feature type="strand" evidence="17">
    <location>
        <begin position="29"/>
        <end position="36"/>
    </location>
</feature>
<feature type="helix" evidence="17">
    <location>
        <begin position="37"/>
        <end position="39"/>
    </location>
</feature>
<feature type="helix" evidence="17">
    <location>
        <begin position="46"/>
        <end position="59"/>
    </location>
</feature>
<feature type="turn" evidence="17">
    <location>
        <begin position="65"/>
        <end position="67"/>
    </location>
</feature>
<feature type="strand" evidence="17">
    <location>
        <begin position="69"/>
        <end position="73"/>
    </location>
</feature>
<feature type="helix" evidence="17">
    <location>
        <begin position="77"/>
        <end position="89"/>
    </location>
</feature>
<feature type="strand" evidence="17">
    <location>
        <begin position="92"/>
        <end position="98"/>
    </location>
</feature>
<feature type="helix" evidence="17">
    <location>
        <begin position="103"/>
        <end position="111"/>
    </location>
</feature>
<feature type="strand" evidence="17">
    <location>
        <begin position="115"/>
        <end position="119"/>
    </location>
</feature>
<feature type="helix" evidence="17">
    <location>
        <begin position="121"/>
        <end position="123"/>
    </location>
</feature>
<feature type="helix" evidence="17">
    <location>
        <begin position="124"/>
        <end position="138"/>
    </location>
</feature>
<feature type="strand" evidence="17">
    <location>
        <begin position="142"/>
        <end position="144"/>
    </location>
</feature>
<feature type="turn" evidence="17">
    <location>
        <begin position="147"/>
        <end position="149"/>
    </location>
</feature>
<feature type="helix" evidence="17">
    <location>
        <begin position="152"/>
        <end position="159"/>
    </location>
</feature>
<feature type="helix" evidence="17">
    <location>
        <begin position="161"/>
        <end position="168"/>
    </location>
</feature>
<feature type="turn" evidence="17">
    <location>
        <begin position="169"/>
        <end position="171"/>
    </location>
</feature>
<feature type="strand" evidence="17">
    <location>
        <begin position="175"/>
        <end position="179"/>
    </location>
</feature>
<feature type="strand" evidence="17">
    <location>
        <begin position="181"/>
        <end position="183"/>
    </location>
</feature>
<feature type="helix" evidence="17">
    <location>
        <begin position="184"/>
        <end position="196"/>
    </location>
</feature>
<feature type="strand" evidence="17">
    <location>
        <begin position="201"/>
        <end position="207"/>
    </location>
</feature>
<feature type="helix" evidence="17">
    <location>
        <begin position="208"/>
        <end position="210"/>
    </location>
</feature>
<feature type="helix" evidence="17">
    <location>
        <begin position="212"/>
        <end position="214"/>
    </location>
</feature>
<feature type="helix" evidence="17">
    <location>
        <begin position="237"/>
        <end position="239"/>
    </location>
</feature>
<feature type="strand" evidence="17">
    <location>
        <begin position="241"/>
        <end position="246"/>
    </location>
</feature>
<feature type="helix" evidence="17">
    <location>
        <begin position="248"/>
        <end position="262"/>
    </location>
</feature>
<feature type="helix" evidence="17">
    <location>
        <begin position="268"/>
        <end position="281"/>
    </location>
</feature>
<feature type="helix" evidence="17">
    <location>
        <begin position="284"/>
        <end position="286"/>
    </location>
</feature>
<feature type="strand" evidence="17">
    <location>
        <begin position="290"/>
        <end position="295"/>
    </location>
</feature>
<feature type="helix" evidence="17">
    <location>
        <begin position="299"/>
        <end position="302"/>
    </location>
</feature>
<feature type="strand" evidence="18">
    <location>
        <begin position="303"/>
        <end position="305"/>
    </location>
</feature>
<feature type="helix" evidence="17">
    <location>
        <begin position="306"/>
        <end position="308"/>
    </location>
</feature>
<feature type="helix" evidence="17">
    <location>
        <begin position="309"/>
        <end position="316"/>
    </location>
</feature>
<keyword id="KW-0002">3D-structure</keyword>
<keyword id="KW-0007">Acetylation</keyword>
<keyword id="KW-0028">Amino-acid biosynthesis</keyword>
<keyword id="KW-0198">Cysteine biosynthesis</keyword>
<keyword id="KW-0963">Cytoplasm</keyword>
<keyword id="KW-0597">Phosphoprotein</keyword>
<keyword id="KW-0663">Pyridoxal phosphate</keyword>
<keyword id="KW-1185">Reference proteome</keyword>
<keyword id="KW-0808">Transferase</keyword>
<gene>
    <name type="primary">OASA1</name>
    <name type="synonym">OAS1</name>
    <name type="synonym">OASS</name>
    <name type="synonym">OLD3</name>
    <name type="ordered locus">At4g14880</name>
    <name type="ORF">dl3480c</name>
</gene>
<evidence type="ECO:0000250" key="1"/>
<evidence type="ECO:0000269" key="2">
    <source>
    </source>
</evidence>
<evidence type="ECO:0000269" key="3">
    <source>
    </source>
</evidence>
<evidence type="ECO:0000269" key="4">
    <source>
    </source>
</evidence>
<evidence type="ECO:0000269" key="5">
    <source>
    </source>
</evidence>
<evidence type="ECO:0000269" key="6">
    <source>
    </source>
</evidence>
<evidence type="ECO:0000269" key="7">
    <source>
    </source>
</evidence>
<evidence type="ECO:0000269" key="8">
    <source>
    </source>
</evidence>
<evidence type="ECO:0000269" key="9">
    <source>
    </source>
</evidence>
<evidence type="ECO:0000305" key="10"/>
<evidence type="ECO:0000305" key="11">
    <source>
    </source>
</evidence>
<evidence type="ECO:0000305" key="12">
    <source>
    </source>
</evidence>
<evidence type="ECO:0000305" key="13">
    <source>
    </source>
</evidence>
<evidence type="ECO:0007744" key="14">
    <source>
        <dbReference type="PDB" id="1Z7W"/>
    </source>
</evidence>
<evidence type="ECO:0007744" key="15">
    <source>
        <dbReference type="PDB" id="2ISQ"/>
    </source>
</evidence>
<evidence type="ECO:0007744" key="16">
    <source>
    </source>
</evidence>
<evidence type="ECO:0007829" key="17">
    <source>
        <dbReference type="PDB" id="1Z7W"/>
    </source>
</evidence>
<evidence type="ECO:0007829" key="18">
    <source>
        <dbReference type="PDB" id="2ISQ"/>
    </source>
</evidence>
<comment type="function">
    <text evidence="6 7 8">Acts as a major cysteine synthase, probably involved in maintaining organic sulfur level.</text>
</comment>
<comment type="catalytic activity">
    <reaction evidence="2 3">
        <text>O-acetyl-L-serine + hydrogen sulfide = L-cysteine + acetate</text>
        <dbReference type="Rhea" id="RHEA:14829"/>
        <dbReference type="ChEBI" id="CHEBI:29919"/>
        <dbReference type="ChEBI" id="CHEBI:30089"/>
        <dbReference type="ChEBI" id="CHEBI:35235"/>
        <dbReference type="ChEBI" id="CHEBI:58340"/>
        <dbReference type="EC" id="2.5.1.47"/>
    </reaction>
</comment>
<comment type="cofactor">
    <cofactor evidence="4 5">
        <name>pyridoxal 5'-phosphate</name>
        <dbReference type="ChEBI" id="CHEBI:597326"/>
    </cofactor>
</comment>
<comment type="activity regulation">
    <text evidence="9">Interaction with the sulfate transporter SULTR1;2 enhances its catalytic activity.</text>
</comment>
<comment type="biophysicochemical properties">
    <kinetics>
        <KM evidence="2 3 4">1.4 mM for O-acetylserine (at pH 7.0 and 25 degrees Celsius) for the cysteine synthase activity</KM>
        <KM evidence="2 3 4">1.22 mM for O(3)-acetyl-L-serine for the cysteine synthase activity</KM>
        <KM evidence="2 3 4">0.69 mM for O(3)-acetyl-L-serine for the cysteine synthase activity</KM>
        <KM evidence="2 3 4">0.22 mM for Na(2)S (at pH 7.0 and 25 degrees Celsius) for the cysteine synthase activity</KM>
        <KM evidence="2 3 4">5.6 uM for H(2)S for the cysteine synthase activity</KM>
        <Vmax evidence="2 3 4">225.0 umol/min/mg enzyme for L-cysteine for the cysteine synthase activity</Vmax>
        <Vmax evidence="2 3 4">906.0 umol/min/mg enzyme for L-cysteine for the cysteine synthase activity</Vmax>
        <Vmax evidence="2 3 4">0.43 umol/min/mg enzyme for H(2)S for the L-3-cyanoalanine synthase activity</Vmax>
    </kinetics>
</comment>
<comment type="pathway">
    <text>Amino-acid biosynthesis; L-cysteine biosynthesis; L-cysteine from L-serine: step 2/2.</text>
</comment>
<comment type="subunit">
    <text evidence="4 5 9">Homodimer. Interacts with SAT1. Component of the cysteine synthase complex (CSC) composed of two OAS-TL dimers and one SAT hexamer. Interacts with SULTR1;2.</text>
</comment>
<comment type="interaction">
    <interactant intactId="EBI-1633418">
        <id>P47998</id>
    </interactant>
    <interactant intactId="EBI-8772960">
        <id>Q9MAX3</id>
        <label>SULTR1;2</label>
    </interactant>
    <organismsDiffer>false</organismsDiffer>
    <experiments>5</experiments>
</comment>
<comment type="subcellular location">
    <subcellularLocation>
        <location evidence="1">Cytoplasm</location>
    </subcellularLocation>
</comment>
<comment type="disruption phenotype">
    <text evidence="6 7 8">No visible phenotype but displays lower levels of thiols in roots and leaves, and also an affected sulfur balance. Also shows an increased sensitivity to cadmium stress.</text>
</comment>
<comment type="similarity">
    <text evidence="10">Belongs to the cysteine synthase/cystathionine beta-synthase family.</text>
</comment>
<accession>P47998</accession>
<accession>O23343</accession>
<accession>Q1EC56</accession>
<accession>Q42570</accession>
<accession>Q94AS7</accession>
<name>CYSK1_ARATH</name>
<dbReference type="EC" id="2.5.1.47"/>
<dbReference type="EMBL" id="X80376">
    <property type="protein sequence ID" value="CAA56593.2"/>
    <property type="molecule type" value="mRNA"/>
</dbReference>
<dbReference type="EMBL" id="X84097">
    <property type="protein sequence ID" value="CAA58893.1"/>
    <property type="molecule type" value="mRNA"/>
</dbReference>
<dbReference type="EMBL" id="AJ272027">
    <property type="protein sequence ID" value="CAB72932.1"/>
    <property type="molecule type" value="Genomic_DNA"/>
</dbReference>
<dbReference type="EMBL" id="Z97337">
    <property type="protein sequence ID" value="CAB10267.1"/>
    <property type="molecule type" value="Genomic_DNA"/>
</dbReference>
<dbReference type="EMBL" id="AL161540">
    <property type="protein sequence ID" value="CAB78530.1"/>
    <property type="molecule type" value="Genomic_DNA"/>
</dbReference>
<dbReference type="EMBL" id="CP002687">
    <property type="protein sequence ID" value="AEE83512.1"/>
    <property type="molecule type" value="Genomic_DNA"/>
</dbReference>
<dbReference type="EMBL" id="CP002687">
    <property type="protein sequence ID" value="AEE83513.1"/>
    <property type="molecule type" value="Genomic_DNA"/>
</dbReference>
<dbReference type="EMBL" id="CP002687">
    <property type="protein sequence ID" value="AEE83514.1"/>
    <property type="molecule type" value="Genomic_DNA"/>
</dbReference>
<dbReference type="EMBL" id="CP002687">
    <property type="protein sequence ID" value="AEE83515.1"/>
    <property type="molecule type" value="Genomic_DNA"/>
</dbReference>
<dbReference type="EMBL" id="CP002687">
    <property type="protein sequence ID" value="ANM66097.1"/>
    <property type="molecule type" value="Genomic_DNA"/>
</dbReference>
<dbReference type="EMBL" id="AY045825">
    <property type="protein sequence ID" value="AAK76499.1"/>
    <property type="molecule type" value="mRNA"/>
</dbReference>
<dbReference type="EMBL" id="BT025878">
    <property type="protein sequence ID" value="ABF85780.1"/>
    <property type="molecule type" value="mRNA"/>
</dbReference>
<dbReference type="PIR" id="A71412">
    <property type="entry name" value="A71412"/>
</dbReference>
<dbReference type="PIR" id="S48694">
    <property type="entry name" value="S48694"/>
</dbReference>
<dbReference type="RefSeq" id="NP_001190732.1">
    <property type="nucleotide sequence ID" value="NM_001203803.1"/>
</dbReference>
<dbReference type="RefSeq" id="NP_001190733.1">
    <property type="nucleotide sequence ID" value="NM_001203804.1"/>
</dbReference>
<dbReference type="RefSeq" id="NP_001328013.1">
    <property type="nucleotide sequence ID" value="NM_001340975.1"/>
</dbReference>
<dbReference type="RefSeq" id="NP_193224.1">
    <property type="nucleotide sequence ID" value="NM_117574.4"/>
</dbReference>
<dbReference type="RefSeq" id="NP_849386.1">
    <property type="nucleotide sequence ID" value="NM_179055.3"/>
</dbReference>
<dbReference type="PDB" id="1Z7W">
    <property type="method" value="X-ray"/>
    <property type="resolution" value="2.20 A"/>
    <property type="chains" value="A=1-322"/>
</dbReference>
<dbReference type="PDB" id="1Z7Y">
    <property type="method" value="X-ray"/>
    <property type="resolution" value="2.70 A"/>
    <property type="chains" value="A=1-322"/>
</dbReference>
<dbReference type="PDB" id="2ISQ">
    <property type="method" value="X-ray"/>
    <property type="resolution" value="2.80 A"/>
    <property type="chains" value="A=3-322"/>
</dbReference>
<dbReference type="PDBsum" id="1Z7W"/>
<dbReference type="PDBsum" id="1Z7Y"/>
<dbReference type="PDBsum" id="2ISQ"/>
<dbReference type="SMR" id="P47998"/>
<dbReference type="BioGRID" id="12442">
    <property type="interactions" value="19"/>
</dbReference>
<dbReference type="FunCoup" id="P47998">
    <property type="interactions" value="2258"/>
</dbReference>
<dbReference type="IntAct" id="P47998">
    <property type="interactions" value="5"/>
</dbReference>
<dbReference type="STRING" id="3702.P47998"/>
<dbReference type="GlyGen" id="P47998">
    <property type="glycosylation" value="1 site"/>
</dbReference>
<dbReference type="iPTMnet" id="P47998"/>
<dbReference type="MetOSite" id="P47998"/>
<dbReference type="PaxDb" id="3702-AT4G14880.4"/>
<dbReference type="ProteomicsDB" id="222595"/>
<dbReference type="EnsemblPlants" id="AT4G14880.1">
    <property type="protein sequence ID" value="AT4G14880.1"/>
    <property type="gene ID" value="AT4G14880"/>
</dbReference>
<dbReference type="EnsemblPlants" id="AT4G14880.2">
    <property type="protein sequence ID" value="AT4G14880.2"/>
    <property type="gene ID" value="AT4G14880"/>
</dbReference>
<dbReference type="EnsemblPlants" id="AT4G14880.3">
    <property type="protein sequence ID" value="AT4G14880.3"/>
    <property type="gene ID" value="AT4G14880"/>
</dbReference>
<dbReference type="EnsemblPlants" id="AT4G14880.4">
    <property type="protein sequence ID" value="AT4G14880.4"/>
    <property type="gene ID" value="AT4G14880"/>
</dbReference>
<dbReference type="EnsemblPlants" id="AT4G14880.5">
    <property type="protein sequence ID" value="AT4G14880.5"/>
    <property type="gene ID" value="AT4G14880"/>
</dbReference>
<dbReference type="GeneID" id="827145"/>
<dbReference type="Gramene" id="AT4G14880.1">
    <property type="protein sequence ID" value="AT4G14880.1"/>
    <property type="gene ID" value="AT4G14880"/>
</dbReference>
<dbReference type="Gramene" id="AT4G14880.2">
    <property type="protein sequence ID" value="AT4G14880.2"/>
    <property type="gene ID" value="AT4G14880"/>
</dbReference>
<dbReference type="Gramene" id="AT4G14880.3">
    <property type="protein sequence ID" value="AT4G14880.3"/>
    <property type="gene ID" value="AT4G14880"/>
</dbReference>
<dbReference type="Gramene" id="AT4G14880.4">
    <property type="protein sequence ID" value="AT4G14880.4"/>
    <property type="gene ID" value="AT4G14880"/>
</dbReference>
<dbReference type="Gramene" id="AT4G14880.5">
    <property type="protein sequence ID" value="AT4G14880.5"/>
    <property type="gene ID" value="AT4G14880"/>
</dbReference>
<dbReference type="KEGG" id="ath:AT4G14880"/>
<dbReference type="Araport" id="AT4G14880"/>
<dbReference type="TAIR" id="AT4G14880">
    <property type="gene designation" value="OASA1"/>
</dbReference>
<dbReference type="eggNOG" id="KOG1252">
    <property type="taxonomic scope" value="Eukaryota"/>
</dbReference>
<dbReference type="HOGENOM" id="CLU_021018_1_0_1"/>
<dbReference type="InParanoid" id="P47998"/>
<dbReference type="OMA" id="MWGAEII"/>
<dbReference type="OrthoDB" id="10259545at2759"/>
<dbReference type="PhylomeDB" id="P47998"/>
<dbReference type="BioCyc" id="MetaCyc:AT4G14880-MONOMER"/>
<dbReference type="BRENDA" id="2.5.1.47">
    <property type="organism ID" value="399"/>
</dbReference>
<dbReference type="SABIO-RK" id="P47998"/>
<dbReference type="UniPathway" id="UPA00136">
    <property type="reaction ID" value="UER00200"/>
</dbReference>
<dbReference type="CD-CODE" id="4299E36E">
    <property type="entry name" value="Nucleolus"/>
</dbReference>
<dbReference type="EvolutionaryTrace" id="P47998"/>
<dbReference type="PRO" id="PR:P47998"/>
<dbReference type="Proteomes" id="UP000006548">
    <property type="component" value="Chromosome 4"/>
</dbReference>
<dbReference type="ExpressionAtlas" id="P47998">
    <property type="expression patterns" value="baseline and differential"/>
</dbReference>
<dbReference type="GO" id="GO:0048046">
    <property type="term" value="C:apoplast"/>
    <property type="evidence" value="ECO:0007005"/>
    <property type="project" value="TAIR"/>
</dbReference>
<dbReference type="GO" id="GO:0009507">
    <property type="term" value="C:chloroplast"/>
    <property type="evidence" value="ECO:0007005"/>
    <property type="project" value="TAIR"/>
</dbReference>
<dbReference type="GO" id="GO:0009570">
    <property type="term" value="C:chloroplast stroma"/>
    <property type="evidence" value="ECO:0007005"/>
    <property type="project" value="TAIR"/>
</dbReference>
<dbReference type="GO" id="GO:0005829">
    <property type="term" value="C:cytosol"/>
    <property type="evidence" value="ECO:0007005"/>
    <property type="project" value="TAIR"/>
</dbReference>
<dbReference type="GO" id="GO:0005634">
    <property type="term" value="C:nucleus"/>
    <property type="evidence" value="ECO:0007005"/>
    <property type="project" value="TAIR"/>
</dbReference>
<dbReference type="GO" id="GO:0005777">
    <property type="term" value="C:peroxisome"/>
    <property type="evidence" value="ECO:0007005"/>
    <property type="project" value="TAIR"/>
</dbReference>
<dbReference type="GO" id="GO:0000325">
    <property type="term" value="C:plant-type vacuole"/>
    <property type="evidence" value="ECO:0007005"/>
    <property type="project" value="TAIR"/>
</dbReference>
<dbReference type="GO" id="GO:0005886">
    <property type="term" value="C:plasma membrane"/>
    <property type="evidence" value="ECO:0007005"/>
    <property type="project" value="TAIR"/>
</dbReference>
<dbReference type="GO" id="GO:0004124">
    <property type="term" value="F:cysteine synthase activity"/>
    <property type="evidence" value="ECO:0000314"/>
    <property type="project" value="TAIR"/>
</dbReference>
<dbReference type="GO" id="GO:0003729">
    <property type="term" value="F:mRNA binding"/>
    <property type="evidence" value="ECO:0000314"/>
    <property type="project" value="TAIR"/>
</dbReference>
<dbReference type="GO" id="GO:0019344">
    <property type="term" value="P:cysteine biosynthetic process"/>
    <property type="evidence" value="ECO:0000315"/>
    <property type="project" value="TAIR"/>
</dbReference>
<dbReference type="GO" id="GO:0006535">
    <property type="term" value="P:cysteine biosynthetic process from serine"/>
    <property type="evidence" value="ECO:0000304"/>
    <property type="project" value="TAIR"/>
</dbReference>
<dbReference type="GO" id="GO:0009567">
    <property type="term" value="P:double fertilization forming a zygote and endosperm"/>
    <property type="evidence" value="ECO:0000316"/>
    <property type="project" value="TAIR"/>
</dbReference>
<dbReference type="GO" id="GO:0009860">
    <property type="term" value="P:pollen tube growth"/>
    <property type="evidence" value="ECO:0000316"/>
    <property type="project" value="TAIR"/>
</dbReference>
<dbReference type="GO" id="GO:0046686">
    <property type="term" value="P:response to cadmium ion"/>
    <property type="evidence" value="ECO:0000314"/>
    <property type="project" value="TAIR"/>
</dbReference>
<dbReference type="CDD" id="cd01561">
    <property type="entry name" value="CBS_like"/>
    <property type="match status" value="1"/>
</dbReference>
<dbReference type="FunFam" id="3.40.50.1100:FF:000006">
    <property type="entry name" value="Cysteine synthase"/>
    <property type="match status" value="1"/>
</dbReference>
<dbReference type="FunFam" id="3.40.50.1100:FF:000130">
    <property type="entry name" value="Cysteine synthase"/>
    <property type="match status" value="1"/>
</dbReference>
<dbReference type="Gene3D" id="3.40.50.1100">
    <property type="match status" value="2"/>
</dbReference>
<dbReference type="InterPro" id="IPR005856">
    <property type="entry name" value="Cys_synth"/>
</dbReference>
<dbReference type="InterPro" id="IPR050214">
    <property type="entry name" value="Cys_Synth/Cystath_Beta-Synth"/>
</dbReference>
<dbReference type="InterPro" id="IPR005859">
    <property type="entry name" value="CysK"/>
</dbReference>
<dbReference type="InterPro" id="IPR001216">
    <property type="entry name" value="P-phosphate_BS"/>
</dbReference>
<dbReference type="InterPro" id="IPR001926">
    <property type="entry name" value="TrpB-like_PALP"/>
</dbReference>
<dbReference type="InterPro" id="IPR036052">
    <property type="entry name" value="TrpB-like_PALP_sf"/>
</dbReference>
<dbReference type="NCBIfam" id="TIGR01139">
    <property type="entry name" value="cysK"/>
    <property type="match status" value="1"/>
</dbReference>
<dbReference type="NCBIfam" id="TIGR01136">
    <property type="entry name" value="cysKM"/>
    <property type="match status" value="1"/>
</dbReference>
<dbReference type="PANTHER" id="PTHR10314">
    <property type="entry name" value="CYSTATHIONINE BETA-SYNTHASE"/>
    <property type="match status" value="1"/>
</dbReference>
<dbReference type="Pfam" id="PF00291">
    <property type="entry name" value="PALP"/>
    <property type="match status" value="1"/>
</dbReference>
<dbReference type="SUPFAM" id="SSF53686">
    <property type="entry name" value="Tryptophan synthase beta subunit-like PLP-dependent enzymes"/>
    <property type="match status" value="1"/>
</dbReference>
<dbReference type="PROSITE" id="PS00901">
    <property type="entry name" value="CYS_SYNTHASE"/>
    <property type="match status" value="1"/>
</dbReference>
<reference key="1">
    <citation type="journal article" date="1994" name="FEBS Lett.">
        <title>Isolation and characterization of two cDNAs encoding for compartment specific isoforms of O-acetylserine (thiol) lyase from Arabidopsis thaliana.</title>
        <authorList>
            <person name="Hell R."/>
            <person name="Bork C."/>
            <person name="Bogdanova N."/>
            <person name="Frolov I."/>
            <person name="Hauschild R."/>
        </authorList>
    </citation>
    <scope>NUCLEOTIDE SEQUENCE [MRNA]</scope>
    <source>
        <strain>cv. Columbia</strain>
        <tissue>Leaf</tissue>
    </source>
</reference>
<reference key="2">
    <citation type="submission" date="2000-02" db="EMBL/GenBank/DDBJ databases">
        <authorList>
            <person name="Hell R."/>
        </authorList>
    </citation>
    <scope>SEQUENCE REVISION</scope>
</reference>
<reference key="3">
    <citation type="journal article" date="1995" name="FEBS Lett.">
        <title>A new member of the cytosolic O-acetylserine(thiol)lyase gene family in Arabidopsis thaliana.</title>
        <authorList>
            <person name="Barroso C."/>
            <person name="Vega J.M."/>
            <person name="Gotor C."/>
        </authorList>
    </citation>
    <scope>NUCLEOTIDE SEQUENCE [MRNA]</scope>
</reference>
<reference key="4">
    <citation type="journal article" date="2000" name="Gene">
        <title>Genomic and functional characterization of the oas gene family encoding O-acetylserine (thiol) lyases, enzymes catalyzing the final step in cysteine biosynthesis in Arabidopsis thaliana.</title>
        <authorList>
            <person name="Jost R."/>
            <person name="Berkowitz O."/>
            <person name="Wirtz M."/>
            <person name="Hopkins L."/>
            <person name="Hawkesford M.J."/>
            <person name="Hell R."/>
        </authorList>
    </citation>
    <scope>NUCLEOTIDE SEQUENCE [GENOMIC DNA]</scope>
    <scope>CATALYTIC ACTIVITY</scope>
    <scope>BIOPHYSICOCHEMICAL PROPERTIES</scope>
    <source>
        <strain>cv. Columbia</strain>
    </source>
</reference>
<reference key="5">
    <citation type="journal article" date="1998" name="Nature">
        <title>Analysis of 1.9 Mb of contiguous sequence from chromosome 4 of Arabidopsis thaliana.</title>
        <authorList>
            <person name="Bevan M."/>
            <person name="Bancroft I."/>
            <person name="Bent E."/>
            <person name="Love K."/>
            <person name="Goodman H.M."/>
            <person name="Dean C."/>
            <person name="Bergkamp R."/>
            <person name="Dirkse W."/>
            <person name="van Staveren M."/>
            <person name="Stiekema W."/>
            <person name="Drost L."/>
            <person name="Ridley P."/>
            <person name="Hudson S.-A."/>
            <person name="Patel K."/>
            <person name="Murphy G."/>
            <person name="Piffanelli P."/>
            <person name="Wedler H."/>
            <person name="Wedler E."/>
            <person name="Wambutt R."/>
            <person name="Weitzenegger T."/>
            <person name="Pohl T."/>
            <person name="Terryn N."/>
            <person name="Gielen J."/>
            <person name="Villarroel R."/>
            <person name="De Clercq R."/>
            <person name="van Montagu M."/>
            <person name="Lecharny A."/>
            <person name="Aubourg S."/>
            <person name="Gy I."/>
            <person name="Kreis M."/>
            <person name="Lao N."/>
            <person name="Kavanagh T."/>
            <person name="Hempel S."/>
            <person name="Kotter P."/>
            <person name="Entian K.-D."/>
            <person name="Rieger M."/>
            <person name="Schaefer M."/>
            <person name="Funk B."/>
            <person name="Mueller-Auer S."/>
            <person name="Silvey M."/>
            <person name="James R."/>
            <person name="Monfort A."/>
            <person name="Pons A."/>
            <person name="Puigdomenech P."/>
            <person name="Douka A."/>
            <person name="Voukelatou E."/>
            <person name="Milioni D."/>
            <person name="Hatzopoulos P."/>
            <person name="Piravandi E."/>
            <person name="Obermaier B."/>
            <person name="Hilbert H."/>
            <person name="Duesterhoeft A."/>
            <person name="Moores T."/>
            <person name="Jones J.D.G."/>
            <person name="Eneva T."/>
            <person name="Palme K."/>
            <person name="Benes V."/>
            <person name="Rechmann S."/>
            <person name="Ansorge W."/>
            <person name="Cooke R."/>
            <person name="Berger C."/>
            <person name="Delseny M."/>
            <person name="Voet M."/>
            <person name="Volckaert G."/>
            <person name="Mewes H.-W."/>
            <person name="Klosterman S."/>
            <person name="Schueller C."/>
            <person name="Chalwatzis N."/>
        </authorList>
    </citation>
    <scope>NUCLEOTIDE SEQUENCE [LARGE SCALE GENOMIC DNA]</scope>
    <source>
        <strain>cv. Columbia</strain>
    </source>
</reference>
<reference key="6">
    <citation type="journal article" date="1999" name="Nature">
        <title>Sequence and analysis of chromosome 4 of the plant Arabidopsis thaliana.</title>
        <authorList>
            <person name="Mayer K.F.X."/>
            <person name="Schueller C."/>
            <person name="Wambutt R."/>
            <person name="Murphy G."/>
            <person name="Volckaert G."/>
            <person name="Pohl T."/>
            <person name="Duesterhoeft A."/>
            <person name="Stiekema W."/>
            <person name="Entian K.-D."/>
            <person name="Terryn N."/>
            <person name="Harris B."/>
            <person name="Ansorge W."/>
            <person name="Brandt P."/>
            <person name="Grivell L.A."/>
            <person name="Rieger M."/>
            <person name="Weichselgartner M."/>
            <person name="de Simone V."/>
            <person name="Obermaier B."/>
            <person name="Mache R."/>
            <person name="Mueller M."/>
            <person name="Kreis M."/>
            <person name="Delseny M."/>
            <person name="Puigdomenech P."/>
            <person name="Watson M."/>
            <person name="Schmidtheini T."/>
            <person name="Reichert B."/>
            <person name="Portetelle D."/>
            <person name="Perez-Alonso M."/>
            <person name="Boutry M."/>
            <person name="Bancroft I."/>
            <person name="Vos P."/>
            <person name="Hoheisel J."/>
            <person name="Zimmermann W."/>
            <person name="Wedler H."/>
            <person name="Ridley P."/>
            <person name="Langham S.-A."/>
            <person name="McCullagh B."/>
            <person name="Bilham L."/>
            <person name="Robben J."/>
            <person name="van der Schueren J."/>
            <person name="Grymonprez B."/>
            <person name="Chuang Y.-J."/>
            <person name="Vandenbussche F."/>
            <person name="Braeken M."/>
            <person name="Weltjens I."/>
            <person name="Voet M."/>
            <person name="Bastiaens I."/>
            <person name="Aert R."/>
            <person name="Defoor E."/>
            <person name="Weitzenegger T."/>
            <person name="Bothe G."/>
            <person name="Ramsperger U."/>
            <person name="Hilbert H."/>
            <person name="Braun M."/>
            <person name="Holzer E."/>
            <person name="Brandt A."/>
            <person name="Peters S."/>
            <person name="van Staveren M."/>
            <person name="Dirkse W."/>
            <person name="Mooijman P."/>
            <person name="Klein Lankhorst R."/>
            <person name="Rose M."/>
            <person name="Hauf J."/>
            <person name="Koetter P."/>
            <person name="Berneiser S."/>
            <person name="Hempel S."/>
            <person name="Feldpausch M."/>
            <person name="Lamberth S."/>
            <person name="Van den Daele H."/>
            <person name="De Keyser A."/>
            <person name="Buysshaert C."/>
            <person name="Gielen J."/>
            <person name="Villarroel R."/>
            <person name="De Clercq R."/>
            <person name="van Montagu M."/>
            <person name="Rogers J."/>
            <person name="Cronin A."/>
            <person name="Quail M.A."/>
            <person name="Bray-Allen S."/>
            <person name="Clark L."/>
            <person name="Doggett J."/>
            <person name="Hall S."/>
            <person name="Kay M."/>
            <person name="Lennard N."/>
            <person name="McLay K."/>
            <person name="Mayes R."/>
            <person name="Pettett A."/>
            <person name="Rajandream M.A."/>
            <person name="Lyne M."/>
            <person name="Benes V."/>
            <person name="Rechmann S."/>
            <person name="Borkova D."/>
            <person name="Bloecker H."/>
            <person name="Scharfe M."/>
            <person name="Grimm M."/>
            <person name="Loehnert T.-H."/>
            <person name="Dose S."/>
            <person name="de Haan M."/>
            <person name="Maarse A.C."/>
            <person name="Schaefer M."/>
            <person name="Mueller-Auer S."/>
            <person name="Gabel C."/>
            <person name="Fuchs M."/>
            <person name="Fartmann B."/>
            <person name="Granderath K."/>
            <person name="Dauner D."/>
            <person name="Herzl A."/>
            <person name="Neumann S."/>
            <person name="Argiriou A."/>
            <person name="Vitale D."/>
            <person name="Liguori R."/>
            <person name="Piravandi E."/>
            <person name="Massenet O."/>
            <person name="Quigley F."/>
            <person name="Clabauld G."/>
            <person name="Muendlein A."/>
            <person name="Felber R."/>
            <person name="Schnabl S."/>
            <person name="Hiller R."/>
            <person name="Schmidt W."/>
            <person name="Lecharny A."/>
            <person name="Aubourg S."/>
            <person name="Chefdor F."/>
            <person name="Cooke R."/>
            <person name="Berger C."/>
            <person name="Monfort A."/>
            <person name="Casacuberta E."/>
            <person name="Gibbons T."/>
            <person name="Weber N."/>
            <person name="Vandenbol M."/>
            <person name="Bargues M."/>
            <person name="Terol J."/>
            <person name="Torres A."/>
            <person name="Perez-Perez A."/>
            <person name="Purnelle B."/>
            <person name="Bent E."/>
            <person name="Johnson S."/>
            <person name="Tacon D."/>
            <person name="Jesse T."/>
            <person name="Heijnen L."/>
            <person name="Schwarz S."/>
            <person name="Scholler P."/>
            <person name="Heber S."/>
            <person name="Francs P."/>
            <person name="Bielke C."/>
            <person name="Frishman D."/>
            <person name="Haase D."/>
            <person name="Lemcke K."/>
            <person name="Mewes H.-W."/>
            <person name="Stocker S."/>
            <person name="Zaccaria P."/>
            <person name="Bevan M."/>
            <person name="Wilson R.K."/>
            <person name="de la Bastide M."/>
            <person name="Habermann K."/>
            <person name="Parnell L."/>
            <person name="Dedhia N."/>
            <person name="Gnoj L."/>
            <person name="Schutz K."/>
            <person name="Huang E."/>
            <person name="Spiegel L."/>
            <person name="Sekhon M."/>
            <person name="Murray J."/>
            <person name="Sheet P."/>
            <person name="Cordes M."/>
            <person name="Abu-Threideh J."/>
            <person name="Stoneking T."/>
            <person name="Kalicki J."/>
            <person name="Graves T."/>
            <person name="Harmon G."/>
            <person name="Edwards J."/>
            <person name="Latreille P."/>
            <person name="Courtney L."/>
            <person name="Cloud J."/>
            <person name="Abbott A."/>
            <person name="Scott K."/>
            <person name="Johnson D."/>
            <person name="Minx P."/>
            <person name="Bentley D."/>
            <person name="Fulton B."/>
            <person name="Miller N."/>
            <person name="Greco T."/>
            <person name="Kemp K."/>
            <person name="Kramer J."/>
            <person name="Fulton L."/>
            <person name="Mardis E."/>
            <person name="Dante M."/>
            <person name="Pepin K."/>
            <person name="Hillier L.W."/>
            <person name="Nelson J."/>
            <person name="Spieth J."/>
            <person name="Ryan E."/>
            <person name="Andrews S."/>
            <person name="Geisel C."/>
            <person name="Layman D."/>
            <person name="Du H."/>
            <person name="Ali J."/>
            <person name="Berghoff A."/>
            <person name="Jones K."/>
            <person name="Drone K."/>
            <person name="Cotton M."/>
            <person name="Joshu C."/>
            <person name="Antonoiu B."/>
            <person name="Zidanic M."/>
            <person name="Strong C."/>
            <person name="Sun H."/>
            <person name="Lamar B."/>
            <person name="Yordan C."/>
            <person name="Ma P."/>
            <person name="Zhong J."/>
            <person name="Preston R."/>
            <person name="Vil D."/>
            <person name="Shekher M."/>
            <person name="Matero A."/>
            <person name="Shah R."/>
            <person name="Swaby I.K."/>
            <person name="O'Shaughnessy A."/>
            <person name="Rodriguez M."/>
            <person name="Hoffman J."/>
            <person name="Till S."/>
            <person name="Granat S."/>
            <person name="Shohdy N."/>
            <person name="Hasegawa A."/>
            <person name="Hameed A."/>
            <person name="Lodhi M."/>
            <person name="Johnson A."/>
            <person name="Chen E."/>
            <person name="Marra M.A."/>
            <person name="Martienssen R."/>
            <person name="McCombie W.R."/>
        </authorList>
    </citation>
    <scope>NUCLEOTIDE SEQUENCE [LARGE SCALE GENOMIC DNA]</scope>
    <source>
        <strain>cv. Columbia</strain>
    </source>
</reference>
<reference key="7">
    <citation type="journal article" date="2017" name="Plant J.">
        <title>Araport11: a complete reannotation of the Arabidopsis thaliana reference genome.</title>
        <authorList>
            <person name="Cheng C.Y."/>
            <person name="Krishnakumar V."/>
            <person name="Chan A.P."/>
            <person name="Thibaud-Nissen F."/>
            <person name="Schobel S."/>
            <person name="Town C.D."/>
        </authorList>
    </citation>
    <scope>GENOME REANNOTATION</scope>
    <source>
        <strain>cv. Columbia</strain>
    </source>
</reference>
<reference key="8">
    <citation type="journal article" date="2003" name="Science">
        <title>Empirical analysis of transcriptional activity in the Arabidopsis genome.</title>
        <authorList>
            <person name="Yamada K."/>
            <person name="Lim J."/>
            <person name="Dale J.M."/>
            <person name="Chen H."/>
            <person name="Shinn P."/>
            <person name="Palm C.J."/>
            <person name="Southwick A.M."/>
            <person name="Wu H.C."/>
            <person name="Kim C.J."/>
            <person name="Nguyen M."/>
            <person name="Pham P.K."/>
            <person name="Cheuk R.F."/>
            <person name="Karlin-Newmann G."/>
            <person name="Liu S.X."/>
            <person name="Lam B."/>
            <person name="Sakano H."/>
            <person name="Wu T."/>
            <person name="Yu G."/>
            <person name="Miranda M."/>
            <person name="Quach H.L."/>
            <person name="Tripp M."/>
            <person name="Chang C.H."/>
            <person name="Lee J.M."/>
            <person name="Toriumi M.J."/>
            <person name="Chan M.M."/>
            <person name="Tang C.C."/>
            <person name="Onodera C.S."/>
            <person name="Deng J.M."/>
            <person name="Akiyama K."/>
            <person name="Ansari Y."/>
            <person name="Arakawa T."/>
            <person name="Banh J."/>
            <person name="Banno F."/>
            <person name="Bowser L."/>
            <person name="Brooks S.Y."/>
            <person name="Carninci P."/>
            <person name="Chao Q."/>
            <person name="Choy N."/>
            <person name="Enju A."/>
            <person name="Goldsmith A.D."/>
            <person name="Gurjal M."/>
            <person name="Hansen N.F."/>
            <person name="Hayashizaki Y."/>
            <person name="Johnson-Hopson C."/>
            <person name="Hsuan V.W."/>
            <person name="Iida K."/>
            <person name="Karnes M."/>
            <person name="Khan S."/>
            <person name="Koesema E."/>
            <person name="Ishida J."/>
            <person name="Jiang P.X."/>
            <person name="Jones T."/>
            <person name="Kawai J."/>
            <person name="Kamiya A."/>
            <person name="Meyers C."/>
            <person name="Nakajima M."/>
            <person name="Narusaka M."/>
            <person name="Seki M."/>
            <person name="Sakurai T."/>
            <person name="Satou M."/>
            <person name="Tamse R."/>
            <person name="Vaysberg M."/>
            <person name="Wallender E.K."/>
            <person name="Wong C."/>
            <person name="Yamamura Y."/>
            <person name="Yuan S."/>
            <person name="Shinozaki K."/>
            <person name="Davis R.W."/>
            <person name="Theologis A."/>
            <person name="Ecker J.R."/>
        </authorList>
    </citation>
    <scope>NUCLEOTIDE SEQUENCE [LARGE SCALE MRNA]</scope>
    <source>
        <strain>cv. Columbia</strain>
    </source>
</reference>
<reference key="9">
    <citation type="submission" date="2006-06" db="EMBL/GenBank/DDBJ databases">
        <title>Arabidopsis ORF clones.</title>
        <authorList>
            <person name="Quinitio C."/>
            <person name="Chen H."/>
            <person name="Kim C.J."/>
            <person name="Shinn P."/>
            <person name="Ecker J.R."/>
        </authorList>
    </citation>
    <scope>NUCLEOTIDE SEQUENCE [LARGE SCALE MRNA]</scope>
    <source>
        <strain>cv. Columbia</strain>
    </source>
</reference>
<reference key="10">
    <citation type="journal article" date="2000" name="Plant Physiol.">
        <title>beta-Cyanoalanine synthase is a mitochondrial cysteine synthase-like protein in spinach and Arabidopsis.</title>
        <authorList>
            <person name="Hatzfeld Y."/>
            <person name="Maruyama A."/>
            <person name="Schmidt A."/>
            <person name="Noji M."/>
            <person name="Ishizawa K."/>
            <person name="Saito K."/>
        </authorList>
    </citation>
    <scope>NOMENCLATURE</scope>
</reference>
<reference key="11">
    <citation type="journal article" date="2004" name="J. Exp. Bot.">
        <title>O-acetylserine (thiol) lyase: an enigmatic enzyme of plant cysteine biosynthesis revisited in Arabidopsis thaliana.</title>
        <authorList>
            <person name="Wirtz M."/>
            <person name="Droux M."/>
            <person name="Hell R."/>
        </authorList>
    </citation>
    <scope>CATALYTIC ACTIVITY</scope>
    <scope>BIOPHYSICOCHEMICAL PROPERTIES</scope>
</reference>
<reference key="12">
    <citation type="journal article" date="2005" name="Photosyn. Res.">
        <title>Synthesis of the sulfur amino acids: cysteine and methionine.</title>
        <authorList>
            <person name="Wirtz M."/>
            <person name="Droux M."/>
        </authorList>
    </citation>
    <scope>REVIEW</scope>
</reference>
<reference key="13">
    <citation type="journal article" date="2008" name="Plant Cell">
        <title>Analysis of the Arabidopsis O-acetylserine(thiol)lyase gene family demonstrates compartment-specific differences in the regulation of cysteine synthesis.</title>
        <authorList>
            <person name="Heeg C."/>
            <person name="Kruse C."/>
            <person name="Jost R."/>
            <person name="Gutensohn M."/>
            <person name="Ruppert T."/>
            <person name="Wirtz M."/>
            <person name="Hell R."/>
        </authorList>
    </citation>
    <scope>FUNCTION</scope>
    <scope>DISRUPTION PHENOTYPE</scope>
    <scope>IDENTIFICATION BY MASS SPECTROMETRY</scope>
</reference>
<reference key="14">
    <citation type="journal article" date="2008" name="Plant Physiol.">
        <title>Physiological roles of the beta-substituted alanine synthase gene family in Arabidopsis.</title>
        <authorList>
            <person name="Watanabe M."/>
            <person name="Kusano M."/>
            <person name="Oikawa A."/>
            <person name="Fukushima A."/>
            <person name="Noji M."/>
            <person name="Saito K."/>
        </authorList>
    </citation>
    <scope>GENE FAMILY</scope>
    <scope>FUNCTION</scope>
    <scope>DISRUPTION PHENOTYPE</scope>
</reference>
<reference key="15">
    <citation type="journal article" date="2010" name="Amino Acids">
        <title>Enzymes of cysteine synthesis show extensive and conserved modifications patterns that include N(alpha)-terminal acetylation.</title>
        <authorList>
            <person name="Wirtz M."/>
            <person name="Heeg C."/>
            <person name="Samami A.A."/>
            <person name="Ruppert T."/>
            <person name="Hell R."/>
        </authorList>
    </citation>
    <scope>ACETYLATION AT ALA-2</scope>
    <scope>CLEAVAGE OF INITIATOR METHIONINE</scope>
    <scope>IDENTIFICATION BY MASS SPECTROMETRY</scope>
</reference>
<reference key="16">
    <citation type="journal article" date="2010" name="BMC Plant Biol.">
        <title>A mutation in the cytosolic O-acetylserine (thiol) lyase induces a genome-dependent early leaf death phenotype in Arabidopsis.</title>
        <authorList>
            <person name="Shirzadian-Khorramabad R."/>
            <person name="Jing H.C."/>
            <person name="Everts G.E."/>
            <person name="Schippers J.H."/>
            <person name="Hille J."/>
            <person name="Dijkwel P.P."/>
        </authorList>
    </citation>
    <scope>MUTAGENESIS OF GLY-162</scope>
    <scope>DISRUPTION PHENOTYPE</scope>
    <scope>FUNCTION</scope>
</reference>
<reference key="17">
    <citation type="journal article" date="2010" name="J. Biol. Chem.">
        <title>Binding of cysteine synthase to the STAS domain of sulfate transporter and its regulatory consequences.</title>
        <authorList>
            <person name="Shibagaki N."/>
            <person name="Grossman A.R."/>
        </authorList>
    </citation>
    <scope>HOMODIMERIZATION</scope>
    <scope>INTERACTION WITH SULTR1;2</scope>
    <scope>ACTIVITY REGULATION</scope>
</reference>
<reference key="18">
    <citation type="journal article" date="2012" name="J. Proteome Res.">
        <title>Identification of phosphoproteins in Arabidopsis thaliana leaves using polyethylene glycol fractionation, immobilized metal-ion affinity chromatography, two-dimensional gel electrophoresis and mass spectrometry.</title>
        <authorList>
            <person name="Aryal U.K."/>
            <person name="Krochko J.E."/>
            <person name="Ross A.R."/>
        </authorList>
    </citation>
    <scope>PHOSPHORYLATION [LARGE SCALE ANALYSIS] AT SER-178</scope>
    <scope>IDENTIFICATION BY MASS SPECTROMETRY [LARGE SCALE ANALYSIS]</scope>
</reference>
<reference key="19">
    <citation type="journal article" date="2005" name="J. Biol. Chem.">
        <title>Molecular basis of cysteine biosynthesis in plants: structural and functional analysis of o-acetylserine sulfhydrylase from Arabidopsis thaliana.</title>
        <authorList>
            <person name="Bonner E.R."/>
            <person name="Cahoon R.E."/>
            <person name="Knapke S.M."/>
            <person name="Jez J.M."/>
        </authorList>
    </citation>
    <scope>X-RAY CRYSTALLOGRAPHY (2.2 ANGSTROMS) OF WILD-TYPE AND MUTANT ALA-46</scope>
    <scope>COFACTOR</scope>
    <scope>SUBUNIT</scope>
    <scope>INTERACTION WITH SAT1</scope>
    <scope>BIOPHYSICOCHEMICAL PROPERTIES</scope>
    <scope>MUTAGENESIS OF LYS-46; THR-74; SER-75; ASN-77; THR-78; GLN-147; HIS-157; THR-182; THR-185; LYS-217; HIS-221; LYS-222 AND SER-269</scope>
</reference>
<reference key="20">
    <citation type="journal article" date="2006" name="Plant Cell">
        <title>Structural basis for interaction of O-acetylserine sulfhydrylase and serine acetyltransferase in the Arabidopsis cysteine synthase complex.</title>
        <authorList>
            <person name="Francois J.A."/>
            <person name="Kumaran S."/>
            <person name="Jez J.M."/>
        </authorList>
    </citation>
    <scope>X-RAY CRYSTALLOGRAPHY (2.8 ANGSTROMS) OF 3-322</scope>
    <scope>COFACTOR</scope>
    <scope>SUBUNIT</scope>
    <scope>INTERACTION WITH SAT1</scope>
</reference>